<protein>
    <recommendedName>
        <fullName>Golgin subfamily A member 5</fullName>
    </recommendedName>
    <alternativeName>
        <fullName>Golgin-84</fullName>
    </alternativeName>
</protein>
<comment type="function">
    <text evidence="1">Involved in maintaining Golgi structure. Stimulates the formation of Golgi stacks and ribbons. Involved in intra-Golgi retrograde transport (By similarity).</text>
</comment>
<comment type="subcellular location">
    <subcellularLocation>
        <location evidence="1">Golgi apparatus membrane</location>
        <topology evidence="1">Single-pass type IV membrane protein</topology>
    </subcellularLocation>
</comment>
<keyword id="KW-0175">Coiled coil</keyword>
<keyword id="KW-0333">Golgi apparatus</keyword>
<keyword id="KW-0472">Membrane</keyword>
<keyword id="KW-1185">Reference proteome</keyword>
<keyword id="KW-0812">Transmembrane</keyword>
<keyword id="KW-1133">Transmembrane helix</keyword>
<gene>
    <name type="primary">golga5</name>
</gene>
<dbReference type="EMBL" id="BC073415">
    <property type="protein sequence ID" value="AAH73415.1"/>
    <property type="molecule type" value="mRNA"/>
</dbReference>
<dbReference type="RefSeq" id="NP_001085841.1">
    <property type="nucleotide sequence ID" value="NM_001092372.1"/>
</dbReference>
<dbReference type="SMR" id="Q6GNT7"/>
<dbReference type="GeneID" id="444268"/>
<dbReference type="KEGG" id="xla:444268"/>
<dbReference type="AGR" id="Xenbase:XB-GENE-1014830"/>
<dbReference type="CTD" id="444268"/>
<dbReference type="Xenbase" id="XB-GENE-1014830">
    <property type="gene designation" value="golga5.L"/>
</dbReference>
<dbReference type="OrthoDB" id="248903at2759"/>
<dbReference type="Proteomes" id="UP000186698">
    <property type="component" value="Chromosome 8L"/>
</dbReference>
<dbReference type="Bgee" id="444268">
    <property type="expression patterns" value="Expressed in egg cell and 19 other cell types or tissues"/>
</dbReference>
<dbReference type="GO" id="GO:0005794">
    <property type="term" value="C:Golgi apparatus"/>
    <property type="evidence" value="ECO:0000250"/>
    <property type="project" value="UniProtKB"/>
</dbReference>
<dbReference type="GO" id="GO:0031985">
    <property type="term" value="C:Golgi cisterna"/>
    <property type="evidence" value="ECO:0000318"/>
    <property type="project" value="GO_Central"/>
</dbReference>
<dbReference type="GO" id="GO:0000139">
    <property type="term" value="C:Golgi membrane"/>
    <property type="evidence" value="ECO:0000318"/>
    <property type="project" value="GO_Central"/>
</dbReference>
<dbReference type="GO" id="GO:0042803">
    <property type="term" value="F:protein homodimerization activity"/>
    <property type="evidence" value="ECO:0000250"/>
    <property type="project" value="UniProtKB"/>
</dbReference>
<dbReference type="GO" id="GO:0007030">
    <property type="term" value="P:Golgi organization"/>
    <property type="evidence" value="ECO:0000250"/>
    <property type="project" value="UniProtKB"/>
</dbReference>
<dbReference type="GO" id="GO:0048193">
    <property type="term" value="P:Golgi vesicle transport"/>
    <property type="evidence" value="ECO:0000250"/>
    <property type="project" value="UniProtKB"/>
</dbReference>
<dbReference type="GO" id="GO:0000301">
    <property type="term" value="P:retrograde transport, vesicle recycling within Golgi"/>
    <property type="evidence" value="ECO:0000318"/>
    <property type="project" value="GO_Central"/>
</dbReference>
<dbReference type="FunFam" id="1.10.287.1490:FF:000009">
    <property type="entry name" value="Golgin subfamily A member 5"/>
    <property type="match status" value="1"/>
</dbReference>
<dbReference type="InterPro" id="IPR019177">
    <property type="entry name" value="Golgin_subfamily_A_member_5"/>
</dbReference>
<dbReference type="PANTHER" id="PTHR13815:SF7">
    <property type="entry name" value="GOLGIN SUBFAMILY A MEMBER 5"/>
    <property type="match status" value="1"/>
</dbReference>
<dbReference type="PANTHER" id="PTHR13815">
    <property type="entry name" value="GOLGIN-84"/>
    <property type="match status" value="1"/>
</dbReference>
<dbReference type="Pfam" id="PF09787">
    <property type="entry name" value="Golgin_A5"/>
    <property type="match status" value="1"/>
</dbReference>
<name>GOGA5_XENLA</name>
<proteinExistence type="evidence at transcript level"/>
<feature type="chain" id="PRO_0000190065" description="Golgin subfamily A member 5">
    <location>
        <begin position="1"/>
        <end position="722"/>
    </location>
</feature>
<feature type="topological domain" description="Cytoplasmic" evidence="2">
    <location>
        <begin position="1"/>
        <end position="689"/>
    </location>
</feature>
<feature type="transmembrane region" description="Helical; Anchor for type IV membrane protein" evidence="2">
    <location>
        <begin position="690"/>
        <end position="710"/>
    </location>
</feature>
<feature type="topological domain" description="Lumenal" evidence="2">
    <location>
        <begin position="711"/>
        <end position="722"/>
    </location>
</feature>
<feature type="region of interest" description="Disordered" evidence="3">
    <location>
        <begin position="90"/>
        <end position="158"/>
    </location>
</feature>
<feature type="region of interest" description="Disordered" evidence="3">
    <location>
        <begin position="194"/>
        <end position="215"/>
    </location>
</feature>
<feature type="coiled-coil region" evidence="2">
    <location>
        <begin position="211"/>
        <end position="622"/>
    </location>
</feature>
<feature type="compositionally biased region" description="Low complexity" evidence="3">
    <location>
        <begin position="91"/>
        <end position="109"/>
    </location>
</feature>
<feature type="compositionally biased region" description="Basic and acidic residues" evidence="3">
    <location>
        <begin position="134"/>
        <end position="148"/>
    </location>
</feature>
<feature type="compositionally biased region" description="Polar residues" evidence="3">
    <location>
        <begin position="149"/>
        <end position="158"/>
    </location>
</feature>
<feature type="compositionally biased region" description="Low complexity" evidence="3">
    <location>
        <begin position="195"/>
        <end position="209"/>
    </location>
</feature>
<sequence>MSWFTDLAGRAEDFLNLVDQGAATALKTKDGNDLIMDSITDYSGNFEEKQKTTEKYQSQAKSSFISSAADNIKHQKATMLAGTANIKTGTRSSIESSHNSSVNVSSHRSTTQFVRQKKSEPDDEQLFDFLNSSDKVHSSSQKETRKESASVNQAVKPISQSVTMAEDFHNTTEDAGVPLLPELGITEPVVKAETLSDSGSSASLSTTGDPKSHELSNLRLENQLLRNEVQSLNQEMASLIQRSKETQEELNEARTRMEKWNGDNSKNDRTARELRAQVDDLSEAMAAKDSQLAVLKVRLQEADQLLKSRTETLESLQIEKSRILQDQSEGSSIHNQALQTMQERLREAESTLIREQESYKQIQNEFATRLSKIEAERQNLAEAVILAEKKHMEEKRKSDDLQQQLKTSKVGLDSLKQEMADYKQKATRILQSKEKLINSLKEGSGIEGLDSHSASTMELEEMRHERDMQREEIQKLMGQIQQLKAELQDVETQQVSEAESAREQLQDVHEQFATQQRAKQELEAELERQKQEFQYIQEDLYKTKNTLQGRIRDREDEIQKLRNQLTNKALSSSSQTELENRLHQLTETLIQKQTMLENLSTEKNSLVYQLERLEHQLKNVQGSSLNGTSINMSVIESNEGARMRNVPVLFSDSDPNVAGMYGRVRKAATSIDQFSIRLGIFLRRYPIARVFIIIYMALLHLWVMIVLLTYTPEMHHDTPSGK</sequence>
<reference key="1">
    <citation type="submission" date="2004-06" db="EMBL/GenBank/DDBJ databases">
        <authorList>
            <consortium name="NIH - Xenopus Gene Collection (XGC) project"/>
        </authorList>
    </citation>
    <scope>NUCLEOTIDE SEQUENCE [LARGE SCALE MRNA]</scope>
    <source>
        <tissue>Embryo</tissue>
    </source>
</reference>
<accession>Q6GNT7</accession>
<organism>
    <name type="scientific">Xenopus laevis</name>
    <name type="common">African clawed frog</name>
    <dbReference type="NCBI Taxonomy" id="8355"/>
    <lineage>
        <taxon>Eukaryota</taxon>
        <taxon>Metazoa</taxon>
        <taxon>Chordata</taxon>
        <taxon>Craniata</taxon>
        <taxon>Vertebrata</taxon>
        <taxon>Euteleostomi</taxon>
        <taxon>Amphibia</taxon>
        <taxon>Batrachia</taxon>
        <taxon>Anura</taxon>
        <taxon>Pipoidea</taxon>
        <taxon>Pipidae</taxon>
        <taxon>Xenopodinae</taxon>
        <taxon>Xenopus</taxon>
        <taxon>Xenopus</taxon>
    </lineage>
</organism>
<evidence type="ECO:0000250" key="1"/>
<evidence type="ECO:0000255" key="2"/>
<evidence type="ECO:0000256" key="3">
    <source>
        <dbReference type="SAM" id="MobiDB-lite"/>
    </source>
</evidence>